<reference key="1">
    <citation type="journal article" date="1969" name="FEBS Lett.">
        <title>The structure of cytochrome c'-3 from Desulfovibrio gigas (NCIB 9332).</title>
        <authorList>
            <person name="Ambler R.P."/>
            <person name="Bruschi M."/>
            <person name="le Gall J."/>
        </authorList>
    </citation>
    <scope>PROTEIN SEQUENCE</scope>
    <source>
        <strain>ATCC 19364 / DSM 1382 / NCIMB 9332 / VKM B-1759</strain>
    </source>
</reference>
<reference key="2">
    <citation type="thesis" date="1989" institute="University of Seattle" country="United States">
        <authorList>
            <person name="Kissinger C."/>
        </authorList>
    </citation>
    <scope>X-RAY CRYSTALLOGRAPHY (2.5 ANGSTROMS)</scope>
</reference>
<reference key="3">
    <citation type="journal article" date="1996" name="Protein Sci.">
        <title>Cytochrome c3 from Desulfovibrio gigas: crystal structure at 1.8-A resolution and evidence for a specific calcium-binding site.</title>
        <authorList>
            <person name="Matias P.M."/>
            <person name="Morais J."/>
            <person name="Coelho R."/>
            <person name="Carrondo M.A."/>
            <person name="Wilson K."/>
            <person name="Dauter Z."/>
            <person name="Sieker L."/>
        </authorList>
    </citation>
    <scope>X-RAY CRYSTALLOGRAPHY (1.8 ANGSTROMS)</scope>
    <scope>SEQUENCE REVISION TO 21</scope>
</reference>
<organism>
    <name type="scientific">Megalodesulfovibrio gigas (strain ATCC 19364 / DSM 1382 / NCIMB 9332 / VKM B-1759)</name>
    <name type="common">Desulfovibrio gigas</name>
    <dbReference type="NCBI Taxonomy" id="1121448"/>
    <lineage>
        <taxon>Bacteria</taxon>
        <taxon>Pseudomonadati</taxon>
        <taxon>Thermodesulfobacteriota</taxon>
        <taxon>Desulfovibrionia</taxon>
        <taxon>Desulfovibrionales</taxon>
        <taxon>Desulfovibrionaceae</taxon>
        <taxon>Megalodesulfovibrio</taxon>
    </lineage>
</organism>
<protein>
    <recommendedName>
        <fullName>Cytochrome c3</fullName>
    </recommendedName>
</protein>
<comment type="function">
    <text>Participates in sulfate respiration coupled with phosphorylation by transferring electrons from the enzyme dehydrogenase to ferredoxin.</text>
</comment>
<comment type="cofactor">
    <cofactor evidence="1">
        <name>heme</name>
        <dbReference type="ChEBI" id="CHEBI:30413"/>
    </cofactor>
    <text evidence="1">Binds 4 heme c groups covalently per monomer.</text>
</comment>
<comment type="miscellaneous">
    <text evidence="1 5">The second and fourth heme binding sites have unusual CXXXXCH motifs.</text>
</comment>
<sequence length="112" mass="11978">VDVPADGAKIDFIAGGEKNLTVVFNHSTHKDVKCDDCHHDPGDKQYAGCTTDGCHNILDKADKSVNSWYKVVHDAKGGAKPTCISCHKDKAGDDKELKKKLTGCKGSACHPS</sequence>
<accession>P00133</accession>
<feature type="chain" id="PRO_0000108360" description="Cytochrome c3">
    <location>
        <begin position="1"/>
        <end position="112"/>
    </location>
</feature>
<feature type="binding site" description="axial binding residue" evidence="3 4 5">
    <location>
        <position position="26"/>
    </location>
    <ligand>
        <name>heme c</name>
        <dbReference type="ChEBI" id="CHEBI:61717"/>
        <label>1</label>
    </ligand>
    <ligandPart>
        <name>Fe</name>
        <dbReference type="ChEBI" id="CHEBI:18248"/>
    </ligandPart>
</feature>
<feature type="binding site" description="axial binding residue" evidence="4 5">
    <location>
        <position position="29"/>
    </location>
    <ligand>
        <name>heme c</name>
        <dbReference type="ChEBI" id="CHEBI:61717"/>
        <label>3</label>
    </ligand>
    <ligandPart>
        <name>Fe</name>
        <dbReference type="ChEBI" id="CHEBI:18248"/>
    </ligandPart>
</feature>
<feature type="binding site" description="covalent" evidence="3 4 5">
    <location>
        <position position="34"/>
    </location>
    <ligand>
        <name>heme c</name>
        <dbReference type="ChEBI" id="CHEBI:61717"/>
        <label>1</label>
    </ligand>
</feature>
<feature type="binding site" description="covalent" evidence="3 4 5">
    <location>
        <position position="37"/>
    </location>
    <ligand>
        <name>heme c</name>
        <dbReference type="ChEBI" id="CHEBI:61717"/>
        <label>1</label>
    </ligand>
</feature>
<feature type="binding site" description="axial binding residue" evidence="3 4 5">
    <location>
        <position position="38"/>
    </location>
    <ligand>
        <name>heme c</name>
        <dbReference type="ChEBI" id="CHEBI:61717"/>
        <label>1</label>
    </ligand>
    <ligandPart>
        <name>Fe</name>
        <dbReference type="ChEBI" id="CHEBI:18248"/>
    </ligandPart>
</feature>
<feature type="binding site" description="axial binding residue" evidence="3 4 5">
    <location>
        <position position="39"/>
    </location>
    <ligand>
        <name>heme c</name>
        <dbReference type="ChEBI" id="CHEBI:61717"/>
        <label>2</label>
    </ligand>
    <ligandPart>
        <name>Fe</name>
        <dbReference type="ChEBI" id="CHEBI:18248"/>
    </ligandPart>
</feature>
<feature type="binding site" description="covalent" evidence="3 4 5">
    <location>
        <position position="49"/>
    </location>
    <ligand>
        <name>heme c</name>
        <dbReference type="ChEBI" id="CHEBI:61717"/>
        <label>2</label>
    </ligand>
</feature>
<feature type="binding site" description="covalent" evidence="3 4 5">
    <location>
        <position position="54"/>
    </location>
    <ligand>
        <name>heme c</name>
        <dbReference type="ChEBI" id="CHEBI:61717"/>
        <label>2</label>
    </ligand>
</feature>
<feature type="binding site" description="axial binding residue" evidence="3 4 5">
    <location>
        <position position="55"/>
    </location>
    <ligand>
        <name>heme c</name>
        <dbReference type="ChEBI" id="CHEBI:61717"/>
        <label>2</label>
    </ligand>
    <ligandPart>
        <name>Fe</name>
        <dbReference type="ChEBI" id="CHEBI:18248"/>
    </ligandPart>
</feature>
<feature type="binding site" description="axial binding residue" evidence="3 4 5">
    <location>
        <position position="73"/>
    </location>
    <ligand>
        <name>heme c</name>
        <dbReference type="ChEBI" id="CHEBI:61717"/>
        <label>4</label>
    </ligand>
    <ligandPart>
        <name>Fe</name>
        <dbReference type="ChEBI" id="CHEBI:18248"/>
    </ligandPart>
</feature>
<feature type="binding site" description="covalent" evidence="3 4 5">
    <location>
        <position position="83"/>
    </location>
    <ligand>
        <name>heme c</name>
        <dbReference type="ChEBI" id="CHEBI:61717"/>
        <label>3</label>
    </ligand>
</feature>
<feature type="binding site" description="covalent" evidence="3 4 5">
    <location>
        <position position="86"/>
    </location>
    <ligand>
        <name>heme c</name>
        <dbReference type="ChEBI" id="CHEBI:61717"/>
        <label>3</label>
    </ligand>
</feature>
<feature type="binding site" description="axial binding residue" evidence="4 5">
    <location>
        <position position="87"/>
    </location>
    <ligand>
        <name>heme c</name>
        <dbReference type="ChEBI" id="CHEBI:61717"/>
        <label>3</label>
    </ligand>
    <ligandPart>
        <name>Fe</name>
        <dbReference type="ChEBI" id="CHEBI:18248"/>
    </ligandPart>
</feature>
<feature type="binding site" description="covalent" evidence="3 4 5">
    <location>
        <position position="104"/>
    </location>
    <ligand>
        <name>heme c</name>
        <dbReference type="ChEBI" id="CHEBI:61717"/>
        <label>4</label>
    </ligand>
</feature>
<feature type="binding site" description="covalent" evidence="3 4 5">
    <location>
        <position position="109"/>
    </location>
    <ligand>
        <name>heme c</name>
        <dbReference type="ChEBI" id="CHEBI:61717"/>
        <label>4</label>
    </ligand>
</feature>
<feature type="binding site" description="axial binding residue" evidence="3 4 5">
    <location>
        <position position="110"/>
    </location>
    <ligand>
        <name>heme c</name>
        <dbReference type="ChEBI" id="CHEBI:61717"/>
        <label>4</label>
    </ligand>
    <ligandPart>
        <name>Fe</name>
        <dbReference type="ChEBI" id="CHEBI:18248"/>
    </ligandPart>
</feature>
<feature type="sequence conflict" description="In Ref. 1; AA sequence." evidence="2" ref="1">
    <location>
        <position position="21"/>
    </location>
</feature>
<feature type="strand" evidence="7">
    <location>
        <begin position="8"/>
        <end position="10"/>
    </location>
</feature>
<feature type="strand" evidence="7">
    <location>
        <begin position="22"/>
        <end position="24"/>
    </location>
</feature>
<feature type="helix" evidence="7">
    <location>
        <begin position="27"/>
        <end position="29"/>
    </location>
</feature>
<feature type="helix" evidence="7">
    <location>
        <begin position="34"/>
        <end position="36"/>
    </location>
</feature>
<feature type="turn" evidence="7">
    <location>
        <begin position="43"/>
        <end position="46"/>
    </location>
</feature>
<feature type="strand" evidence="6">
    <location>
        <begin position="49"/>
        <end position="55"/>
    </location>
</feature>
<feature type="strand" evidence="6">
    <location>
        <begin position="60"/>
        <end position="62"/>
    </location>
</feature>
<feature type="helix" evidence="7">
    <location>
        <begin position="68"/>
        <end position="73"/>
    </location>
</feature>
<feature type="helix" evidence="7">
    <location>
        <begin position="83"/>
        <end position="91"/>
    </location>
</feature>
<feature type="helix" evidence="7">
    <location>
        <begin position="95"/>
        <end position="102"/>
    </location>
</feature>
<feature type="strand" evidence="7">
    <location>
        <begin position="104"/>
        <end position="109"/>
    </location>
</feature>
<evidence type="ECO:0000269" key="1">
    <source>
    </source>
</evidence>
<evidence type="ECO:0000305" key="2"/>
<evidence type="ECO:0007744" key="3">
    <source>
        <dbReference type="PDB" id="1QN0"/>
    </source>
</evidence>
<evidence type="ECO:0007744" key="4">
    <source>
        <dbReference type="PDB" id="1QN1"/>
    </source>
</evidence>
<evidence type="ECO:0007744" key="5">
    <source>
        <dbReference type="PDB" id="1WAD"/>
    </source>
</evidence>
<evidence type="ECO:0007829" key="6">
    <source>
        <dbReference type="PDB" id="1QN1"/>
    </source>
</evidence>
<evidence type="ECO:0007829" key="7">
    <source>
        <dbReference type="PDB" id="1WAD"/>
    </source>
</evidence>
<dbReference type="PIR" id="A00126">
    <property type="entry name" value="CCDV3G"/>
</dbReference>
<dbReference type="PDB" id="1QN0">
    <property type="method" value="NMR"/>
    <property type="chains" value="A=1-112"/>
</dbReference>
<dbReference type="PDB" id="1QN1">
    <property type="method" value="NMR"/>
    <property type="chains" value="A=1-112"/>
</dbReference>
<dbReference type="PDB" id="1WAD">
    <property type="method" value="X-ray"/>
    <property type="resolution" value="1.80 A"/>
    <property type="chains" value="A=1-112"/>
</dbReference>
<dbReference type="PDBsum" id="1QN0"/>
<dbReference type="PDBsum" id="1QN1"/>
<dbReference type="PDBsum" id="1WAD"/>
<dbReference type="BMRB" id="P00133"/>
<dbReference type="SMR" id="P00133"/>
<dbReference type="STRING" id="1121448.DGI_0144"/>
<dbReference type="EvolutionaryTrace" id="P00133"/>
<dbReference type="GO" id="GO:0009055">
    <property type="term" value="F:electron transfer activity"/>
    <property type="evidence" value="ECO:0007669"/>
    <property type="project" value="InterPro"/>
</dbReference>
<dbReference type="GO" id="GO:0020037">
    <property type="term" value="F:heme binding"/>
    <property type="evidence" value="ECO:0007669"/>
    <property type="project" value="InterPro"/>
</dbReference>
<dbReference type="GO" id="GO:0046872">
    <property type="term" value="F:metal ion binding"/>
    <property type="evidence" value="ECO:0007669"/>
    <property type="project" value="UniProtKB-KW"/>
</dbReference>
<dbReference type="GO" id="GO:0009061">
    <property type="term" value="P:anaerobic respiration"/>
    <property type="evidence" value="ECO:0007669"/>
    <property type="project" value="UniProtKB-KW"/>
</dbReference>
<dbReference type="CDD" id="cd08168">
    <property type="entry name" value="Cytochrom_C3"/>
    <property type="match status" value="1"/>
</dbReference>
<dbReference type="Gene3D" id="3.90.10.10">
    <property type="entry name" value="Cytochrome C3"/>
    <property type="match status" value="1"/>
</dbReference>
<dbReference type="InterPro" id="IPR002322">
    <property type="entry name" value="Cyt_c_III"/>
</dbReference>
<dbReference type="InterPro" id="IPR020942">
    <property type="entry name" value="Cyt_c_III_dom"/>
</dbReference>
<dbReference type="InterPro" id="IPR036280">
    <property type="entry name" value="Multihaem_cyt_sf"/>
</dbReference>
<dbReference type="Pfam" id="PF02085">
    <property type="entry name" value="Cytochrom_CIII"/>
    <property type="match status" value="1"/>
</dbReference>
<dbReference type="PRINTS" id="PR00609">
    <property type="entry name" value="CYTOCHROMEC3"/>
</dbReference>
<dbReference type="SUPFAM" id="SSF48695">
    <property type="entry name" value="Multiheme cytochromes"/>
    <property type="match status" value="1"/>
</dbReference>
<dbReference type="PROSITE" id="PS51008">
    <property type="entry name" value="MULTIHEME_CYTC"/>
    <property type="match status" value="1"/>
</dbReference>
<proteinExistence type="evidence at protein level"/>
<name>CYC3_MEGG1</name>
<keyword id="KW-0002">3D-structure</keyword>
<keyword id="KW-0903">Direct protein sequencing</keyword>
<keyword id="KW-0249">Electron transport</keyword>
<keyword id="KW-0349">Heme</keyword>
<keyword id="KW-0408">Iron</keyword>
<keyword id="KW-0479">Metal-binding</keyword>
<keyword id="KW-0763">Sulfate respiration</keyword>
<keyword id="KW-0813">Transport</keyword>